<protein>
    <recommendedName>
        <fullName>Homeobox protein Hox-C5</fullName>
    </recommendedName>
    <alternativeName>
        <fullName>Homeobox protein Hox-3.4</fullName>
    </alternativeName>
    <alternativeName>
        <fullName>Homeobox protein Hox-6.2</fullName>
    </alternativeName>
</protein>
<accession>P32043</accession>
<accession>Q8BJW4</accession>
<gene>
    <name type="primary">Hoxc5</name>
    <name type="synonym">Hox-3.4</name>
    <name type="synonym">Hoxc-5</name>
</gene>
<comment type="function">
    <text>Sequence-specific transcription factor which is part of a developmental regulatory system that provides cells with specific positional identities on the anterior-posterior axis.</text>
</comment>
<comment type="subcellular location">
    <subcellularLocation>
        <location>Nucleus</location>
    </subcellularLocation>
</comment>
<comment type="similarity">
    <text evidence="3">Belongs to the Antp homeobox family.</text>
</comment>
<sequence>MSSYVANSFYKQSPNIPAYNMQTCGNYGSASEVQASRYCYGGLDLSITFPPPAPSNSLHGVDMAANPRAHPDRPACSAAAAPGHALGRDEAAPLNPGMYSQKAARPALEERAKSSGEIKEEQAQTGQPAGLSQPPAPPQIYPWMTKLHMSHETDGKRSRTSYTRYQTLELEKEFHFNRYLTRRRRIEIANNLCLNERQIKIWFQNRRMKWKKDSKMKSKEAL</sequence>
<evidence type="ECO:0000255" key="1">
    <source>
        <dbReference type="PROSITE-ProRule" id="PRU00108"/>
    </source>
</evidence>
<evidence type="ECO:0000256" key="2">
    <source>
        <dbReference type="SAM" id="MobiDB-lite"/>
    </source>
</evidence>
<evidence type="ECO:0000305" key="3"/>
<feature type="chain" id="PRO_0000200170" description="Homeobox protein Hox-C5">
    <location>
        <begin position="1"/>
        <end position="222"/>
    </location>
</feature>
<feature type="DNA-binding region" description="Homeobox" evidence="1">
    <location>
        <begin position="155"/>
        <end position="214"/>
    </location>
</feature>
<feature type="region of interest" description="Disordered" evidence="2">
    <location>
        <begin position="68"/>
        <end position="141"/>
    </location>
</feature>
<feature type="short sequence motif" description="Antp-type hexapeptide">
    <location>
        <begin position="140"/>
        <end position="145"/>
    </location>
</feature>
<feature type="compositionally biased region" description="Low complexity" evidence="2">
    <location>
        <begin position="74"/>
        <end position="85"/>
    </location>
</feature>
<feature type="compositionally biased region" description="Basic and acidic residues" evidence="2">
    <location>
        <begin position="107"/>
        <end position="122"/>
    </location>
</feature>
<feature type="sequence conflict" description="In Ref. 1; AAA79876." evidence="3" ref="1">
    <original>L</original>
    <variation>P</variation>
    <location>
        <position position="86"/>
    </location>
</feature>
<feature type="sequence conflict" description="In Ref. 1; AAA79876." evidence="3" ref="1">
    <original>T</original>
    <variation>R</variation>
    <location>
        <position position="125"/>
    </location>
</feature>
<keyword id="KW-0217">Developmental protein</keyword>
<keyword id="KW-0238">DNA-binding</keyword>
<keyword id="KW-0371">Homeobox</keyword>
<keyword id="KW-0539">Nucleus</keyword>
<keyword id="KW-1185">Reference proteome</keyword>
<keyword id="KW-0804">Transcription</keyword>
<keyword id="KW-0805">Transcription regulation</keyword>
<organism>
    <name type="scientific">Mus musculus</name>
    <name type="common">Mouse</name>
    <dbReference type="NCBI Taxonomy" id="10090"/>
    <lineage>
        <taxon>Eukaryota</taxon>
        <taxon>Metazoa</taxon>
        <taxon>Chordata</taxon>
        <taxon>Craniata</taxon>
        <taxon>Vertebrata</taxon>
        <taxon>Euteleostomi</taxon>
        <taxon>Mammalia</taxon>
        <taxon>Eutheria</taxon>
        <taxon>Euarchontoglires</taxon>
        <taxon>Glires</taxon>
        <taxon>Rodentia</taxon>
        <taxon>Myomorpha</taxon>
        <taxon>Muroidea</taxon>
        <taxon>Muridae</taxon>
        <taxon>Murinae</taxon>
        <taxon>Mus</taxon>
        <taxon>Mus</taxon>
    </lineage>
</organism>
<dbReference type="EMBL" id="U28071">
    <property type="protein sequence ID" value="AAA79876.1"/>
    <property type="molecule type" value="Genomic_DNA"/>
</dbReference>
<dbReference type="EMBL" id="AK078527">
    <property type="protein sequence ID" value="BAC37324.1"/>
    <property type="molecule type" value="mRNA"/>
</dbReference>
<dbReference type="EMBL" id="BC115551">
    <property type="protein sequence ID" value="AAI15552.1"/>
    <property type="molecule type" value="mRNA"/>
</dbReference>
<dbReference type="EMBL" id="BC115552">
    <property type="protein sequence ID" value="AAI15553.1"/>
    <property type="molecule type" value="mRNA"/>
</dbReference>
<dbReference type="CCDS" id="CCDS27896.1"/>
<dbReference type="PIR" id="A60084">
    <property type="entry name" value="A60084"/>
</dbReference>
<dbReference type="RefSeq" id="NP_783857.1">
    <property type="nucleotide sequence ID" value="NM_175730.5"/>
</dbReference>
<dbReference type="SMR" id="P32043"/>
<dbReference type="BioGRID" id="200387">
    <property type="interactions" value="3"/>
</dbReference>
<dbReference type="FunCoup" id="P32043">
    <property type="interactions" value="724"/>
</dbReference>
<dbReference type="IntAct" id="P32043">
    <property type="interactions" value="3"/>
</dbReference>
<dbReference type="STRING" id="10090.ENSMUSP00000001709"/>
<dbReference type="PhosphoSitePlus" id="P32043"/>
<dbReference type="PaxDb" id="10090-ENSMUSP00000001709"/>
<dbReference type="ProteomicsDB" id="266934"/>
<dbReference type="Antibodypedia" id="27321">
    <property type="antibodies" value="131 antibodies from 19 providers"/>
</dbReference>
<dbReference type="DNASU" id="15424"/>
<dbReference type="Ensembl" id="ENSMUST00000001709.3">
    <property type="protein sequence ID" value="ENSMUSP00000001709.3"/>
    <property type="gene ID" value="ENSMUSG00000022485.4"/>
</dbReference>
<dbReference type="GeneID" id="15424"/>
<dbReference type="KEGG" id="mmu:15424"/>
<dbReference type="UCSC" id="uc007xxe.1">
    <property type="organism name" value="mouse"/>
</dbReference>
<dbReference type="AGR" id="MGI:96196"/>
<dbReference type="CTD" id="3222"/>
<dbReference type="MGI" id="MGI:96196">
    <property type="gene designation" value="Hoxc5"/>
</dbReference>
<dbReference type="VEuPathDB" id="HostDB:ENSMUSG00000022485"/>
<dbReference type="eggNOG" id="KOG0489">
    <property type="taxonomic scope" value="Eukaryota"/>
</dbReference>
<dbReference type="GeneTree" id="ENSGT00940000161023"/>
<dbReference type="HOGENOM" id="CLU_061398_2_1_1"/>
<dbReference type="InParanoid" id="P32043"/>
<dbReference type="OMA" id="AYTMQSY"/>
<dbReference type="OrthoDB" id="6159439at2759"/>
<dbReference type="PhylomeDB" id="P32043"/>
<dbReference type="TreeFam" id="TF316310"/>
<dbReference type="BioGRID-ORCS" id="15424">
    <property type="hits" value="3 hits in 77 CRISPR screens"/>
</dbReference>
<dbReference type="PRO" id="PR:P32043"/>
<dbReference type="Proteomes" id="UP000000589">
    <property type="component" value="Chromosome 15"/>
</dbReference>
<dbReference type="RNAct" id="P32043">
    <property type="molecule type" value="protein"/>
</dbReference>
<dbReference type="Bgee" id="ENSMUSG00000022485">
    <property type="expression patterns" value="Expressed in thoracic region of vertebral column and 95 other cell types or tissues"/>
</dbReference>
<dbReference type="GO" id="GO:0030054">
    <property type="term" value="C:cell junction"/>
    <property type="evidence" value="ECO:0007669"/>
    <property type="project" value="Ensembl"/>
</dbReference>
<dbReference type="GO" id="GO:0005654">
    <property type="term" value="C:nucleoplasm"/>
    <property type="evidence" value="ECO:0007669"/>
    <property type="project" value="Ensembl"/>
</dbReference>
<dbReference type="GO" id="GO:0003677">
    <property type="term" value="F:DNA binding"/>
    <property type="evidence" value="ECO:0007669"/>
    <property type="project" value="UniProtKB-KW"/>
</dbReference>
<dbReference type="GO" id="GO:0000981">
    <property type="term" value="F:DNA-binding transcription factor activity, RNA polymerase II-specific"/>
    <property type="evidence" value="ECO:0007669"/>
    <property type="project" value="InterPro"/>
</dbReference>
<dbReference type="GO" id="GO:0009952">
    <property type="term" value="P:anterior/posterior pattern specification"/>
    <property type="evidence" value="ECO:0000316"/>
    <property type="project" value="MGI"/>
</dbReference>
<dbReference type="GO" id="GO:0048706">
    <property type="term" value="P:embryonic skeletal system development"/>
    <property type="evidence" value="ECO:0000316"/>
    <property type="project" value="MGI"/>
</dbReference>
<dbReference type="CDD" id="cd00086">
    <property type="entry name" value="homeodomain"/>
    <property type="match status" value="1"/>
</dbReference>
<dbReference type="FunFam" id="1.10.10.60:FF:000055">
    <property type="entry name" value="Homeobox protein Hox-A5"/>
    <property type="match status" value="1"/>
</dbReference>
<dbReference type="Gene3D" id="1.10.10.60">
    <property type="entry name" value="Homeodomain-like"/>
    <property type="match status" value="1"/>
</dbReference>
<dbReference type="InterPro" id="IPR050609">
    <property type="entry name" value="Antp_homeobox_Deformed_sf"/>
</dbReference>
<dbReference type="InterPro" id="IPR001356">
    <property type="entry name" value="HD"/>
</dbReference>
<dbReference type="InterPro" id="IPR020479">
    <property type="entry name" value="HD_metazoa"/>
</dbReference>
<dbReference type="InterPro" id="IPR017995">
    <property type="entry name" value="Homeobox_antennapedia"/>
</dbReference>
<dbReference type="InterPro" id="IPR001827">
    <property type="entry name" value="Homeobox_Antennapedia_CS"/>
</dbReference>
<dbReference type="InterPro" id="IPR017970">
    <property type="entry name" value="Homeobox_CS"/>
</dbReference>
<dbReference type="InterPro" id="IPR009057">
    <property type="entry name" value="Homeodomain-like_sf"/>
</dbReference>
<dbReference type="PANTHER" id="PTHR45771:SF13">
    <property type="entry name" value="HOMEOBOX C5"/>
    <property type="match status" value="1"/>
</dbReference>
<dbReference type="PANTHER" id="PTHR45771">
    <property type="entry name" value="HOMEOTIC PROTEIN DEFORMED"/>
    <property type="match status" value="1"/>
</dbReference>
<dbReference type="Pfam" id="PF00046">
    <property type="entry name" value="Homeodomain"/>
    <property type="match status" value="1"/>
</dbReference>
<dbReference type="PRINTS" id="PR00025">
    <property type="entry name" value="ANTENNAPEDIA"/>
</dbReference>
<dbReference type="PRINTS" id="PR00024">
    <property type="entry name" value="HOMEOBOX"/>
</dbReference>
<dbReference type="SMART" id="SM00389">
    <property type="entry name" value="HOX"/>
    <property type="match status" value="1"/>
</dbReference>
<dbReference type="SUPFAM" id="SSF46689">
    <property type="entry name" value="Homeodomain-like"/>
    <property type="match status" value="1"/>
</dbReference>
<dbReference type="PROSITE" id="PS00032">
    <property type="entry name" value="ANTENNAPEDIA"/>
    <property type="match status" value="1"/>
</dbReference>
<dbReference type="PROSITE" id="PS00027">
    <property type="entry name" value="HOMEOBOX_1"/>
    <property type="match status" value="1"/>
</dbReference>
<dbReference type="PROSITE" id="PS50071">
    <property type="entry name" value="HOMEOBOX_2"/>
    <property type="match status" value="1"/>
</dbReference>
<name>HXC5_MOUSE</name>
<proteinExistence type="evidence at transcript level"/>
<reference key="1">
    <citation type="journal article" date="1996" name="Mamm. Genome">
        <title>Characterization of the murine Hoxc-5 gene.</title>
        <authorList>
            <person name="Geada A.M."/>
            <person name="Coletta P.L."/>
            <person name="Sharpe P.T."/>
        </authorList>
    </citation>
    <scope>NUCLEOTIDE SEQUENCE [GENOMIC DNA]</scope>
</reference>
<reference key="2">
    <citation type="journal article" date="2005" name="Science">
        <title>The transcriptional landscape of the mammalian genome.</title>
        <authorList>
            <person name="Carninci P."/>
            <person name="Kasukawa T."/>
            <person name="Katayama S."/>
            <person name="Gough J."/>
            <person name="Frith M.C."/>
            <person name="Maeda N."/>
            <person name="Oyama R."/>
            <person name="Ravasi T."/>
            <person name="Lenhard B."/>
            <person name="Wells C."/>
            <person name="Kodzius R."/>
            <person name="Shimokawa K."/>
            <person name="Bajic V.B."/>
            <person name="Brenner S.E."/>
            <person name="Batalov S."/>
            <person name="Forrest A.R."/>
            <person name="Zavolan M."/>
            <person name="Davis M.J."/>
            <person name="Wilming L.G."/>
            <person name="Aidinis V."/>
            <person name="Allen J.E."/>
            <person name="Ambesi-Impiombato A."/>
            <person name="Apweiler R."/>
            <person name="Aturaliya R.N."/>
            <person name="Bailey T.L."/>
            <person name="Bansal M."/>
            <person name="Baxter L."/>
            <person name="Beisel K.W."/>
            <person name="Bersano T."/>
            <person name="Bono H."/>
            <person name="Chalk A.M."/>
            <person name="Chiu K.P."/>
            <person name="Choudhary V."/>
            <person name="Christoffels A."/>
            <person name="Clutterbuck D.R."/>
            <person name="Crowe M.L."/>
            <person name="Dalla E."/>
            <person name="Dalrymple B.P."/>
            <person name="de Bono B."/>
            <person name="Della Gatta G."/>
            <person name="di Bernardo D."/>
            <person name="Down T."/>
            <person name="Engstrom P."/>
            <person name="Fagiolini M."/>
            <person name="Faulkner G."/>
            <person name="Fletcher C.F."/>
            <person name="Fukushima T."/>
            <person name="Furuno M."/>
            <person name="Futaki S."/>
            <person name="Gariboldi M."/>
            <person name="Georgii-Hemming P."/>
            <person name="Gingeras T.R."/>
            <person name="Gojobori T."/>
            <person name="Green R.E."/>
            <person name="Gustincich S."/>
            <person name="Harbers M."/>
            <person name="Hayashi Y."/>
            <person name="Hensch T.K."/>
            <person name="Hirokawa N."/>
            <person name="Hill D."/>
            <person name="Huminiecki L."/>
            <person name="Iacono M."/>
            <person name="Ikeo K."/>
            <person name="Iwama A."/>
            <person name="Ishikawa T."/>
            <person name="Jakt M."/>
            <person name="Kanapin A."/>
            <person name="Katoh M."/>
            <person name="Kawasawa Y."/>
            <person name="Kelso J."/>
            <person name="Kitamura H."/>
            <person name="Kitano H."/>
            <person name="Kollias G."/>
            <person name="Krishnan S.P."/>
            <person name="Kruger A."/>
            <person name="Kummerfeld S.K."/>
            <person name="Kurochkin I.V."/>
            <person name="Lareau L.F."/>
            <person name="Lazarevic D."/>
            <person name="Lipovich L."/>
            <person name="Liu J."/>
            <person name="Liuni S."/>
            <person name="McWilliam S."/>
            <person name="Madan Babu M."/>
            <person name="Madera M."/>
            <person name="Marchionni L."/>
            <person name="Matsuda H."/>
            <person name="Matsuzawa S."/>
            <person name="Miki H."/>
            <person name="Mignone F."/>
            <person name="Miyake S."/>
            <person name="Morris K."/>
            <person name="Mottagui-Tabar S."/>
            <person name="Mulder N."/>
            <person name="Nakano N."/>
            <person name="Nakauchi H."/>
            <person name="Ng P."/>
            <person name="Nilsson R."/>
            <person name="Nishiguchi S."/>
            <person name="Nishikawa S."/>
            <person name="Nori F."/>
            <person name="Ohara O."/>
            <person name="Okazaki Y."/>
            <person name="Orlando V."/>
            <person name="Pang K.C."/>
            <person name="Pavan W.J."/>
            <person name="Pavesi G."/>
            <person name="Pesole G."/>
            <person name="Petrovsky N."/>
            <person name="Piazza S."/>
            <person name="Reed J."/>
            <person name="Reid J.F."/>
            <person name="Ring B.Z."/>
            <person name="Ringwald M."/>
            <person name="Rost B."/>
            <person name="Ruan Y."/>
            <person name="Salzberg S.L."/>
            <person name="Sandelin A."/>
            <person name="Schneider C."/>
            <person name="Schoenbach C."/>
            <person name="Sekiguchi K."/>
            <person name="Semple C.A."/>
            <person name="Seno S."/>
            <person name="Sessa L."/>
            <person name="Sheng Y."/>
            <person name="Shibata Y."/>
            <person name="Shimada H."/>
            <person name="Shimada K."/>
            <person name="Silva D."/>
            <person name="Sinclair B."/>
            <person name="Sperling S."/>
            <person name="Stupka E."/>
            <person name="Sugiura K."/>
            <person name="Sultana R."/>
            <person name="Takenaka Y."/>
            <person name="Taki K."/>
            <person name="Tammoja K."/>
            <person name="Tan S.L."/>
            <person name="Tang S."/>
            <person name="Taylor M.S."/>
            <person name="Tegner J."/>
            <person name="Teichmann S.A."/>
            <person name="Ueda H.R."/>
            <person name="van Nimwegen E."/>
            <person name="Verardo R."/>
            <person name="Wei C.L."/>
            <person name="Yagi K."/>
            <person name="Yamanishi H."/>
            <person name="Zabarovsky E."/>
            <person name="Zhu S."/>
            <person name="Zimmer A."/>
            <person name="Hide W."/>
            <person name="Bult C."/>
            <person name="Grimmond S.M."/>
            <person name="Teasdale R.D."/>
            <person name="Liu E.T."/>
            <person name="Brusic V."/>
            <person name="Quackenbush J."/>
            <person name="Wahlestedt C."/>
            <person name="Mattick J.S."/>
            <person name="Hume D.A."/>
            <person name="Kai C."/>
            <person name="Sasaki D."/>
            <person name="Tomaru Y."/>
            <person name="Fukuda S."/>
            <person name="Kanamori-Katayama M."/>
            <person name="Suzuki M."/>
            <person name="Aoki J."/>
            <person name="Arakawa T."/>
            <person name="Iida J."/>
            <person name="Imamura K."/>
            <person name="Itoh M."/>
            <person name="Kato T."/>
            <person name="Kawaji H."/>
            <person name="Kawagashira N."/>
            <person name="Kawashima T."/>
            <person name="Kojima M."/>
            <person name="Kondo S."/>
            <person name="Konno H."/>
            <person name="Nakano K."/>
            <person name="Ninomiya N."/>
            <person name="Nishio T."/>
            <person name="Okada M."/>
            <person name="Plessy C."/>
            <person name="Shibata K."/>
            <person name="Shiraki T."/>
            <person name="Suzuki S."/>
            <person name="Tagami M."/>
            <person name="Waki K."/>
            <person name="Watahiki A."/>
            <person name="Okamura-Oho Y."/>
            <person name="Suzuki H."/>
            <person name="Kawai J."/>
            <person name="Hayashizaki Y."/>
        </authorList>
    </citation>
    <scope>NUCLEOTIDE SEQUENCE [LARGE SCALE MRNA]</scope>
    <source>
        <strain>C57BL/6J</strain>
        <tissue>Muellerian duct</tissue>
    </source>
</reference>
<reference key="3">
    <citation type="journal article" date="2004" name="Genome Res.">
        <title>The status, quality, and expansion of the NIH full-length cDNA project: the Mammalian Gene Collection (MGC).</title>
        <authorList>
            <consortium name="The MGC Project Team"/>
        </authorList>
    </citation>
    <scope>NUCLEOTIDE SEQUENCE [LARGE SCALE MRNA]</scope>
</reference>
<reference key="4">
    <citation type="journal article" date="1990" name="Development">
        <title>Mouse Hox-3.4: homeobox sequence and embryonic expression patterns compared with other members of the Hox gene network.</title>
        <authorList>
            <person name="Gaunt S.J."/>
            <person name="Coletta P.L."/>
            <person name="Pravtcheva D."/>
            <person name="Sharpe P.T."/>
        </authorList>
    </citation>
    <scope>NUCLEOTIDE SEQUENCE [GENOMIC DNA] OF 152-222</scope>
</reference>